<accession>Q4L6S8</accession>
<proteinExistence type="inferred from homology"/>
<comment type="function">
    <text evidence="1">Methylates ribosomal protein L11.</text>
</comment>
<comment type="catalytic activity">
    <reaction evidence="1">
        <text>L-lysyl-[protein] + 3 S-adenosyl-L-methionine = N(6),N(6),N(6)-trimethyl-L-lysyl-[protein] + 3 S-adenosyl-L-homocysteine + 3 H(+)</text>
        <dbReference type="Rhea" id="RHEA:54192"/>
        <dbReference type="Rhea" id="RHEA-COMP:9752"/>
        <dbReference type="Rhea" id="RHEA-COMP:13826"/>
        <dbReference type="ChEBI" id="CHEBI:15378"/>
        <dbReference type="ChEBI" id="CHEBI:29969"/>
        <dbReference type="ChEBI" id="CHEBI:57856"/>
        <dbReference type="ChEBI" id="CHEBI:59789"/>
        <dbReference type="ChEBI" id="CHEBI:61961"/>
    </reaction>
</comment>
<comment type="subcellular location">
    <subcellularLocation>
        <location evidence="1">Cytoplasm</location>
    </subcellularLocation>
</comment>
<comment type="similarity">
    <text evidence="1">Belongs to the methyltransferase superfamily. PrmA family.</text>
</comment>
<reference key="1">
    <citation type="journal article" date="2005" name="J. Bacteriol.">
        <title>Whole-genome sequencing of Staphylococcus haemolyticus uncovers the extreme plasticity of its genome and the evolution of human-colonizing staphylococcal species.</title>
        <authorList>
            <person name="Takeuchi F."/>
            <person name="Watanabe S."/>
            <person name="Baba T."/>
            <person name="Yuzawa H."/>
            <person name="Ito T."/>
            <person name="Morimoto Y."/>
            <person name="Kuroda M."/>
            <person name="Cui L."/>
            <person name="Takahashi M."/>
            <person name="Ankai A."/>
            <person name="Baba S."/>
            <person name="Fukui S."/>
            <person name="Lee J.C."/>
            <person name="Hiramatsu K."/>
        </authorList>
    </citation>
    <scope>NUCLEOTIDE SEQUENCE [LARGE SCALE GENOMIC DNA]</scope>
    <source>
        <strain>JCSC1435</strain>
    </source>
</reference>
<keyword id="KW-0963">Cytoplasm</keyword>
<keyword id="KW-0489">Methyltransferase</keyword>
<keyword id="KW-0949">S-adenosyl-L-methionine</keyword>
<keyword id="KW-0808">Transferase</keyword>
<sequence length="312" mass="35216">MNWTELSIVVNHEVEPLVTDILENYGSNGVVIEDSNDLINQPADKFGEIYELKQEDYPEKGVRLKAYFNELKFDDSLRNKIKTAVTNLENIDSTVLNFSEQTIAEVDWENEWKNYFHPFRASEKFTIVPSWEQYTKEDDSEMCIELDPGMAFGTGDHPTTSMCLKAIETYVDSDNSVIDVGTGSGILSIASHLLGVKRIKALDIDELAVNVAKENFAKNHCEDAIEAVPGNLLKNETEKFDIVIANILAHIIEDMIEDAYNTLNKDGYFITSGIIEEKHKQILNKMQNVGFDIKSVNHDNGWVCIVGQKVSE</sequence>
<name>PRMA_STAHJ</name>
<gene>
    <name evidence="1" type="primary">prmA</name>
    <name type="ordered locus">SH1338</name>
</gene>
<dbReference type="EC" id="2.1.1.-" evidence="1"/>
<dbReference type="EMBL" id="AP006716">
    <property type="protein sequence ID" value="BAE04647.1"/>
    <property type="molecule type" value="Genomic_DNA"/>
</dbReference>
<dbReference type="RefSeq" id="WP_011275635.1">
    <property type="nucleotide sequence ID" value="NC_007168.1"/>
</dbReference>
<dbReference type="SMR" id="Q4L6S8"/>
<dbReference type="GeneID" id="93780738"/>
<dbReference type="KEGG" id="sha:SH1338"/>
<dbReference type="eggNOG" id="COG2264">
    <property type="taxonomic scope" value="Bacteria"/>
</dbReference>
<dbReference type="HOGENOM" id="CLU_049382_0_1_9"/>
<dbReference type="OrthoDB" id="9785995at2"/>
<dbReference type="Proteomes" id="UP000000543">
    <property type="component" value="Chromosome"/>
</dbReference>
<dbReference type="GO" id="GO:0005737">
    <property type="term" value="C:cytoplasm"/>
    <property type="evidence" value="ECO:0007669"/>
    <property type="project" value="UniProtKB-SubCell"/>
</dbReference>
<dbReference type="GO" id="GO:0016279">
    <property type="term" value="F:protein-lysine N-methyltransferase activity"/>
    <property type="evidence" value="ECO:0007669"/>
    <property type="project" value="RHEA"/>
</dbReference>
<dbReference type="GO" id="GO:0032259">
    <property type="term" value="P:methylation"/>
    <property type="evidence" value="ECO:0007669"/>
    <property type="project" value="UniProtKB-KW"/>
</dbReference>
<dbReference type="CDD" id="cd02440">
    <property type="entry name" value="AdoMet_MTases"/>
    <property type="match status" value="1"/>
</dbReference>
<dbReference type="Gene3D" id="3.40.50.150">
    <property type="entry name" value="Vaccinia Virus protein VP39"/>
    <property type="match status" value="1"/>
</dbReference>
<dbReference type="HAMAP" id="MF_00735">
    <property type="entry name" value="Methyltr_PrmA"/>
    <property type="match status" value="1"/>
</dbReference>
<dbReference type="InterPro" id="IPR050078">
    <property type="entry name" value="Ribosomal_L11_MeTrfase_PrmA"/>
</dbReference>
<dbReference type="InterPro" id="IPR004498">
    <property type="entry name" value="Ribosomal_PrmA_MeTrfase"/>
</dbReference>
<dbReference type="InterPro" id="IPR029063">
    <property type="entry name" value="SAM-dependent_MTases_sf"/>
</dbReference>
<dbReference type="NCBIfam" id="TIGR00406">
    <property type="entry name" value="prmA"/>
    <property type="match status" value="1"/>
</dbReference>
<dbReference type="PANTHER" id="PTHR43648">
    <property type="entry name" value="ELECTRON TRANSFER FLAVOPROTEIN BETA SUBUNIT LYSINE METHYLTRANSFERASE"/>
    <property type="match status" value="1"/>
</dbReference>
<dbReference type="PANTHER" id="PTHR43648:SF1">
    <property type="entry name" value="ELECTRON TRANSFER FLAVOPROTEIN BETA SUBUNIT LYSINE METHYLTRANSFERASE"/>
    <property type="match status" value="1"/>
</dbReference>
<dbReference type="Pfam" id="PF06325">
    <property type="entry name" value="PrmA"/>
    <property type="match status" value="1"/>
</dbReference>
<dbReference type="PIRSF" id="PIRSF000401">
    <property type="entry name" value="RPL11_MTase"/>
    <property type="match status" value="1"/>
</dbReference>
<dbReference type="SUPFAM" id="SSF53335">
    <property type="entry name" value="S-adenosyl-L-methionine-dependent methyltransferases"/>
    <property type="match status" value="1"/>
</dbReference>
<feature type="chain" id="PRO_0000192311" description="Ribosomal protein L11 methyltransferase">
    <location>
        <begin position="1"/>
        <end position="312"/>
    </location>
</feature>
<feature type="binding site" evidence="1">
    <location>
        <position position="160"/>
    </location>
    <ligand>
        <name>S-adenosyl-L-methionine</name>
        <dbReference type="ChEBI" id="CHEBI:59789"/>
    </ligand>
</feature>
<feature type="binding site" evidence="1">
    <location>
        <position position="181"/>
    </location>
    <ligand>
        <name>S-adenosyl-L-methionine</name>
        <dbReference type="ChEBI" id="CHEBI:59789"/>
    </ligand>
</feature>
<feature type="binding site" evidence="1">
    <location>
        <position position="203"/>
    </location>
    <ligand>
        <name>S-adenosyl-L-methionine</name>
        <dbReference type="ChEBI" id="CHEBI:59789"/>
    </ligand>
</feature>
<feature type="binding site" evidence="1">
    <location>
        <position position="246"/>
    </location>
    <ligand>
        <name>S-adenosyl-L-methionine</name>
        <dbReference type="ChEBI" id="CHEBI:59789"/>
    </ligand>
</feature>
<organism>
    <name type="scientific">Staphylococcus haemolyticus (strain JCSC1435)</name>
    <dbReference type="NCBI Taxonomy" id="279808"/>
    <lineage>
        <taxon>Bacteria</taxon>
        <taxon>Bacillati</taxon>
        <taxon>Bacillota</taxon>
        <taxon>Bacilli</taxon>
        <taxon>Bacillales</taxon>
        <taxon>Staphylococcaceae</taxon>
        <taxon>Staphylococcus</taxon>
    </lineage>
</organism>
<protein>
    <recommendedName>
        <fullName evidence="1">Ribosomal protein L11 methyltransferase</fullName>
        <shortName evidence="1">L11 Mtase</shortName>
        <ecNumber evidence="1">2.1.1.-</ecNumber>
    </recommendedName>
</protein>
<evidence type="ECO:0000255" key="1">
    <source>
        <dbReference type="HAMAP-Rule" id="MF_00735"/>
    </source>
</evidence>